<dbReference type="EC" id="1.2.1.38" evidence="1"/>
<dbReference type="EMBL" id="CP000923">
    <property type="protein sequence ID" value="ABY91965.1"/>
    <property type="molecule type" value="Genomic_DNA"/>
</dbReference>
<dbReference type="RefSeq" id="WP_009052160.1">
    <property type="nucleotide sequence ID" value="NC_010320.1"/>
</dbReference>
<dbReference type="SMR" id="B0K4D2"/>
<dbReference type="KEGG" id="tex:Teth514_0657"/>
<dbReference type="HOGENOM" id="CLU_006384_0_1_9"/>
<dbReference type="UniPathway" id="UPA00068">
    <property type="reaction ID" value="UER00108"/>
</dbReference>
<dbReference type="Proteomes" id="UP000002155">
    <property type="component" value="Chromosome"/>
</dbReference>
<dbReference type="GO" id="GO:0005737">
    <property type="term" value="C:cytoplasm"/>
    <property type="evidence" value="ECO:0007669"/>
    <property type="project" value="UniProtKB-SubCell"/>
</dbReference>
<dbReference type="GO" id="GO:0003942">
    <property type="term" value="F:N-acetyl-gamma-glutamyl-phosphate reductase activity"/>
    <property type="evidence" value="ECO:0007669"/>
    <property type="project" value="UniProtKB-UniRule"/>
</dbReference>
<dbReference type="GO" id="GO:0051287">
    <property type="term" value="F:NAD binding"/>
    <property type="evidence" value="ECO:0007669"/>
    <property type="project" value="InterPro"/>
</dbReference>
<dbReference type="GO" id="GO:0070401">
    <property type="term" value="F:NADP+ binding"/>
    <property type="evidence" value="ECO:0007669"/>
    <property type="project" value="InterPro"/>
</dbReference>
<dbReference type="GO" id="GO:0006526">
    <property type="term" value="P:L-arginine biosynthetic process"/>
    <property type="evidence" value="ECO:0007669"/>
    <property type="project" value="UniProtKB-UniRule"/>
</dbReference>
<dbReference type="CDD" id="cd23934">
    <property type="entry name" value="AGPR_1_C"/>
    <property type="match status" value="1"/>
</dbReference>
<dbReference type="CDD" id="cd17895">
    <property type="entry name" value="AGPR_1_N"/>
    <property type="match status" value="1"/>
</dbReference>
<dbReference type="FunFam" id="3.30.360.10:FF:000014">
    <property type="entry name" value="N-acetyl-gamma-glutamyl-phosphate reductase"/>
    <property type="match status" value="1"/>
</dbReference>
<dbReference type="Gene3D" id="3.30.360.10">
    <property type="entry name" value="Dihydrodipicolinate Reductase, domain 2"/>
    <property type="match status" value="1"/>
</dbReference>
<dbReference type="Gene3D" id="3.40.50.720">
    <property type="entry name" value="NAD(P)-binding Rossmann-like Domain"/>
    <property type="match status" value="1"/>
</dbReference>
<dbReference type="HAMAP" id="MF_00150">
    <property type="entry name" value="ArgC_type1"/>
    <property type="match status" value="1"/>
</dbReference>
<dbReference type="InterPro" id="IPR023013">
    <property type="entry name" value="AGPR_AS"/>
</dbReference>
<dbReference type="InterPro" id="IPR000706">
    <property type="entry name" value="AGPR_type-1"/>
</dbReference>
<dbReference type="InterPro" id="IPR036291">
    <property type="entry name" value="NAD(P)-bd_dom_sf"/>
</dbReference>
<dbReference type="InterPro" id="IPR050085">
    <property type="entry name" value="NAGSA_dehydrogenase"/>
</dbReference>
<dbReference type="InterPro" id="IPR000534">
    <property type="entry name" value="Semialdehyde_DH_NAD-bd"/>
</dbReference>
<dbReference type="NCBIfam" id="TIGR01850">
    <property type="entry name" value="argC"/>
    <property type="match status" value="1"/>
</dbReference>
<dbReference type="PANTHER" id="PTHR32338:SF10">
    <property type="entry name" value="N-ACETYL-GAMMA-GLUTAMYL-PHOSPHATE REDUCTASE, CHLOROPLASTIC-RELATED"/>
    <property type="match status" value="1"/>
</dbReference>
<dbReference type="PANTHER" id="PTHR32338">
    <property type="entry name" value="N-ACETYL-GAMMA-GLUTAMYL-PHOSPHATE REDUCTASE, CHLOROPLASTIC-RELATED-RELATED"/>
    <property type="match status" value="1"/>
</dbReference>
<dbReference type="Pfam" id="PF01118">
    <property type="entry name" value="Semialdhyde_dh"/>
    <property type="match status" value="1"/>
</dbReference>
<dbReference type="Pfam" id="PF22698">
    <property type="entry name" value="Semialdhyde_dhC_1"/>
    <property type="match status" value="1"/>
</dbReference>
<dbReference type="SMART" id="SM00859">
    <property type="entry name" value="Semialdhyde_dh"/>
    <property type="match status" value="1"/>
</dbReference>
<dbReference type="SUPFAM" id="SSF55347">
    <property type="entry name" value="Glyceraldehyde-3-phosphate dehydrogenase-like, C-terminal domain"/>
    <property type="match status" value="1"/>
</dbReference>
<dbReference type="SUPFAM" id="SSF51735">
    <property type="entry name" value="NAD(P)-binding Rossmann-fold domains"/>
    <property type="match status" value="1"/>
</dbReference>
<dbReference type="PROSITE" id="PS01224">
    <property type="entry name" value="ARGC"/>
    <property type="match status" value="1"/>
</dbReference>
<feature type="chain" id="PRO_1000096744" description="N-acetyl-gamma-glutamyl-phosphate reductase">
    <location>
        <begin position="1"/>
        <end position="344"/>
    </location>
</feature>
<feature type="active site" evidence="1">
    <location>
        <position position="149"/>
    </location>
</feature>
<evidence type="ECO:0000255" key="1">
    <source>
        <dbReference type="HAMAP-Rule" id="MF_00150"/>
    </source>
</evidence>
<keyword id="KW-0028">Amino-acid biosynthesis</keyword>
<keyword id="KW-0055">Arginine biosynthesis</keyword>
<keyword id="KW-0963">Cytoplasm</keyword>
<keyword id="KW-0521">NADP</keyword>
<keyword id="KW-0560">Oxidoreductase</keyword>
<accession>B0K4D2</accession>
<protein>
    <recommendedName>
        <fullName evidence="1">N-acetyl-gamma-glutamyl-phosphate reductase</fullName>
        <shortName evidence="1">AGPR</shortName>
        <ecNumber evidence="1">1.2.1.38</ecNumber>
    </recommendedName>
    <alternativeName>
        <fullName evidence="1">N-acetyl-glutamate semialdehyde dehydrogenase</fullName>
        <shortName evidence="1">NAGSA dehydrogenase</shortName>
    </alternativeName>
</protein>
<reference key="1">
    <citation type="submission" date="2008-01" db="EMBL/GenBank/DDBJ databases">
        <title>Complete sequence of Thermoanaerobacter sp. X514.</title>
        <authorList>
            <consortium name="US DOE Joint Genome Institute"/>
            <person name="Copeland A."/>
            <person name="Lucas S."/>
            <person name="Lapidus A."/>
            <person name="Barry K."/>
            <person name="Glavina del Rio T."/>
            <person name="Dalin E."/>
            <person name="Tice H."/>
            <person name="Pitluck S."/>
            <person name="Bruce D."/>
            <person name="Goodwin L."/>
            <person name="Saunders E."/>
            <person name="Brettin T."/>
            <person name="Detter J.C."/>
            <person name="Han C."/>
            <person name="Schmutz J."/>
            <person name="Larimer F."/>
            <person name="Land M."/>
            <person name="Hauser L."/>
            <person name="Kyrpides N."/>
            <person name="Kim E."/>
            <person name="Hemme C."/>
            <person name="Fields M.W."/>
            <person name="He Z."/>
            <person name="Zhou J."/>
            <person name="Richardson P."/>
        </authorList>
    </citation>
    <scope>NUCLEOTIDE SEQUENCE [LARGE SCALE GENOMIC DNA]</scope>
    <source>
        <strain>X514</strain>
    </source>
</reference>
<name>ARGC_THEPX</name>
<gene>
    <name evidence="1" type="primary">argC</name>
    <name type="ordered locus">Teth514_0657</name>
</gene>
<sequence>MVKVGIFGATGYTGVELIRILSKHEKVEIKYLSSQSYNTIAISNVYSSLLGFCDKVLEEVDFERAMSECDVIFTALPSGHAAKIAREAVKKGIKVIDLGADFRFDDYSIYKEWYSGEYDGYDGIKRVYGLPEIYRDDIKEAQVVGNPGCYPTSVILGLMPLLKNGIIEGKIIVDSKSGVSGAGRSPSQNNMYAECNENIKAYNVAKHRHIPEMEQELSKIFGETVSVVFTPHLAPMTRGILSTMYCKLKKDIDVDTVYDIYADFYKKEYFIKVLEPGHYPATKSVYGSNFCHIGFEVDKRTNTLIVMSAIDNLVKGASGQAVQNMNIMFGIDENTGLDIVPIYP</sequence>
<proteinExistence type="inferred from homology"/>
<organism>
    <name type="scientific">Thermoanaerobacter sp. (strain X514)</name>
    <dbReference type="NCBI Taxonomy" id="399726"/>
    <lineage>
        <taxon>Bacteria</taxon>
        <taxon>Bacillati</taxon>
        <taxon>Bacillota</taxon>
        <taxon>Clostridia</taxon>
        <taxon>Thermoanaerobacterales</taxon>
        <taxon>Thermoanaerobacteraceae</taxon>
        <taxon>Thermoanaerobacter</taxon>
    </lineage>
</organism>
<comment type="function">
    <text evidence="1">Catalyzes the NADPH-dependent reduction of N-acetyl-5-glutamyl phosphate to yield N-acetyl-L-glutamate 5-semialdehyde.</text>
</comment>
<comment type="catalytic activity">
    <reaction evidence="1">
        <text>N-acetyl-L-glutamate 5-semialdehyde + phosphate + NADP(+) = N-acetyl-L-glutamyl 5-phosphate + NADPH + H(+)</text>
        <dbReference type="Rhea" id="RHEA:21588"/>
        <dbReference type="ChEBI" id="CHEBI:15378"/>
        <dbReference type="ChEBI" id="CHEBI:29123"/>
        <dbReference type="ChEBI" id="CHEBI:43474"/>
        <dbReference type="ChEBI" id="CHEBI:57783"/>
        <dbReference type="ChEBI" id="CHEBI:57936"/>
        <dbReference type="ChEBI" id="CHEBI:58349"/>
        <dbReference type="EC" id="1.2.1.38"/>
    </reaction>
</comment>
<comment type="pathway">
    <text evidence="1">Amino-acid biosynthesis; L-arginine biosynthesis; N(2)-acetyl-L-ornithine from L-glutamate: step 3/4.</text>
</comment>
<comment type="subcellular location">
    <subcellularLocation>
        <location evidence="1">Cytoplasm</location>
    </subcellularLocation>
</comment>
<comment type="similarity">
    <text evidence="1">Belongs to the NAGSA dehydrogenase family. Type 1 subfamily.</text>
</comment>